<keyword id="KW-0028">Amino-acid biosynthesis</keyword>
<keyword id="KW-0057">Aromatic amino acid biosynthesis</keyword>
<keyword id="KW-0170">Cobalt</keyword>
<keyword id="KW-0963">Cytoplasm</keyword>
<keyword id="KW-0456">Lyase</keyword>
<keyword id="KW-0479">Metal-binding</keyword>
<keyword id="KW-0520">NAD</keyword>
<keyword id="KW-0547">Nucleotide-binding</keyword>
<keyword id="KW-1185">Reference proteome</keyword>
<keyword id="KW-0862">Zinc</keyword>
<dbReference type="EC" id="4.2.3.4" evidence="1"/>
<dbReference type="EMBL" id="CU928161">
    <property type="protein sequence ID" value="CAR04989.1"/>
    <property type="molecule type" value="Genomic_DNA"/>
</dbReference>
<dbReference type="RefSeq" id="WP_000439850.1">
    <property type="nucleotide sequence ID" value="NC_011742.1"/>
</dbReference>
<dbReference type="SMR" id="B7MD00"/>
<dbReference type="KEGG" id="ecz:ECS88_3774"/>
<dbReference type="HOGENOM" id="CLU_001201_0_2_6"/>
<dbReference type="UniPathway" id="UPA00053">
    <property type="reaction ID" value="UER00085"/>
</dbReference>
<dbReference type="Proteomes" id="UP000000747">
    <property type="component" value="Chromosome"/>
</dbReference>
<dbReference type="GO" id="GO:0005737">
    <property type="term" value="C:cytoplasm"/>
    <property type="evidence" value="ECO:0007669"/>
    <property type="project" value="UniProtKB-SubCell"/>
</dbReference>
<dbReference type="GO" id="GO:0003856">
    <property type="term" value="F:3-dehydroquinate synthase activity"/>
    <property type="evidence" value="ECO:0007669"/>
    <property type="project" value="UniProtKB-UniRule"/>
</dbReference>
<dbReference type="GO" id="GO:0046872">
    <property type="term" value="F:metal ion binding"/>
    <property type="evidence" value="ECO:0007669"/>
    <property type="project" value="UniProtKB-KW"/>
</dbReference>
<dbReference type="GO" id="GO:0000166">
    <property type="term" value="F:nucleotide binding"/>
    <property type="evidence" value="ECO:0007669"/>
    <property type="project" value="UniProtKB-KW"/>
</dbReference>
<dbReference type="GO" id="GO:0008652">
    <property type="term" value="P:amino acid biosynthetic process"/>
    <property type="evidence" value="ECO:0007669"/>
    <property type="project" value="UniProtKB-KW"/>
</dbReference>
<dbReference type="GO" id="GO:0009073">
    <property type="term" value="P:aromatic amino acid family biosynthetic process"/>
    <property type="evidence" value="ECO:0007669"/>
    <property type="project" value="UniProtKB-KW"/>
</dbReference>
<dbReference type="GO" id="GO:0009423">
    <property type="term" value="P:chorismate biosynthetic process"/>
    <property type="evidence" value="ECO:0007669"/>
    <property type="project" value="UniProtKB-UniRule"/>
</dbReference>
<dbReference type="CDD" id="cd08195">
    <property type="entry name" value="DHQS"/>
    <property type="match status" value="1"/>
</dbReference>
<dbReference type="FunFam" id="1.20.1090.10:FF:000002">
    <property type="entry name" value="3-dehydroquinate synthase"/>
    <property type="match status" value="1"/>
</dbReference>
<dbReference type="FunFam" id="3.40.50.1970:FF:000001">
    <property type="entry name" value="3-dehydroquinate synthase"/>
    <property type="match status" value="1"/>
</dbReference>
<dbReference type="Gene3D" id="3.40.50.1970">
    <property type="match status" value="1"/>
</dbReference>
<dbReference type="Gene3D" id="1.20.1090.10">
    <property type="entry name" value="Dehydroquinate synthase-like - alpha domain"/>
    <property type="match status" value="1"/>
</dbReference>
<dbReference type="HAMAP" id="MF_00110">
    <property type="entry name" value="DHQ_synthase"/>
    <property type="match status" value="1"/>
</dbReference>
<dbReference type="InterPro" id="IPR050071">
    <property type="entry name" value="Dehydroquinate_synthase"/>
</dbReference>
<dbReference type="InterPro" id="IPR016037">
    <property type="entry name" value="DHQ_synth_AroB"/>
</dbReference>
<dbReference type="InterPro" id="IPR030963">
    <property type="entry name" value="DHQ_synth_fam"/>
</dbReference>
<dbReference type="InterPro" id="IPR030960">
    <property type="entry name" value="DHQS/DOIS_N"/>
</dbReference>
<dbReference type="InterPro" id="IPR056179">
    <property type="entry name" value="DHQS_C"/>
</dbReference>
<dbReference type="NCBIfam" id="TIGR01357">
    <property type="entry name" value="aroB"/>
    <property type="match status" value="1"/>
</dbReference>
<dbReference type="PANTHER" id="PTHR43622">
    <property type="entry name" value="3-DEHYDROQUINATE SYNTHASE"/>
    <property type="match status" value="1"/>
</dbReference>
<dbReference type="PANTHER" id="PTHR43622:SF7">
    <property type="entry name" value="3-DEHYDROQUINATE SYNTHASE, CHLOROPLASTIC"/>
    <property type="match status" value="1"/>
</dbReference>
<dbReference type="Pfam" id="PF01761">
    <property type="entry name" value="DHQ_synthase"/>
    <property type="match status" value="1"/>
</dbReference>
<dbReference type="Pfam" id="PF24621">
    <property type="entry name" value="DHQS_C"/>
    <property type="match status" value="1"/>
</dbReference>
<dbReference type="PIRSF" id="PIRSF001455">
    <property type="entry name" value="DHQ_synth"/>
    <property type="match status" value="1"/>
</dbReference>
<dbReference type="SUPFAM" id="SSF56796">
    <property type="entry name" value="Dehydroquinate synthase-like"/>
    <property type="match status" value="1"/>
</dbReference>
<sequence>MERIVVTLGERSYPITIASGLFNEPASFLPLKSGEQVMLVTNETLAPLYLDKVRGVLEQAGVNVDSVILPDGEQYKSLAVLDTVFTALLQKPHGRDTTLVALGGGVVGDLTGFAAASYQRGVRFIQVPTTLLSQVDSSVGGKTAVNHPLGKNMIGAFYQPASVVVDLDCLKTLPPRELASGLAEVIKYGIILDGAFFNWLEENLDALLRLDGPAMAYCIRRCCELKAEVVAADERETGLRALLNLGHTFGHAIEAEMGYGNWLHGEAVAAGMVMAARTSERLGQFSSAETQRIITLLTRAGLPVNGPREMSAQAYLPHMLRDKKVLAGEMRLILPLAIGKSEVRSGVSHELVLNAIADCQSA</sequence>
<protein>
    <recommendedName>
        <fullName evidence="1">3-dehydroquinate synthase</fullName>
        <shortName evidence="1">DHQS</shortName>
        <ecNumber evidence="1">4.2.3.4</ecNumber>
    </recommendedName>
</protein>
<name>AROB_ECO45</name>
<comment type="function">
    <text evidence="1">Catalyzes the conversion of 3-deoxy-D-arabino-heptulosonate 7-phosphate (DAHP) to dehydroquinate (DHQ).</text>
</comment>
<comment type="catalytic activity">
    <reaction evidence="1">
        <text>7-phospho-2-dehydro-3-deoxy-D-arabino-heptonate = 3-dehydroquinate + phosphate</text>
        <dbReference type="Rhea" id="RHEA:21968"/>
        <dbReference type="ChEBI" id="CHEBI:32364"/>
        <dbReference type="ChEBI" id="CHEBI:43474"/>
        <dbReference type="ChEBI" id="CHEBI:58394"/>
        <dbReference type="EC" id="4.2.3.4"/>
    </reaction>
</comment>
<comment type="cofactor">
    <cofactor evidence="1">
        <name>Co(2+)</name>
        <dbReference type="ChEBI" id="CHEBI:48828"/>
    </cofactor>
    <cofactor evidence="1">
        <name>Zn(2+)</name>
        <dbReference type="ChEBI" id="CHEBI:29105"/>
    </cofactor>
    <text evidence="1">Binds 1 divalent metal cation per subunit. Can use either Co(2+) or Zn(2+).</text>
</comment>
<comment type="cofactor">
    <cofactor evidence="1">
        <name>NAD(+)</name>
        <dbReference type="ChEBI" id="CHEBI:57540"/>
    </cofactor>
</comment>
<comment type="pathway">
    <text evidence="1">Metabolic intermediate biosynthesis; chorismate biosynthesis; chorismate from D-erythrose 4-phosphate and phosphoenolpyruvate: step 2/7.</text>
</comment>
<comment type="subcellular location">
    <subcellularLocation>
        <location evidence="1">Cytoplasm</location>
    </subcellularLocation>
</comment>
<comment type="similarity">
    <text evidence="1">Belongs to the sugar phosphate cyclases superfamily. Dehydroquinate synthase family.</text>
</comment>
<gene>
    <name evidence="1" type="primary">aroB</name>
    <name type="ordered locus">ECS88_3774</name>
</gene>
<proteinExistence type="inferred from homology"/>
<organism>
    <name type="scientific">Escherichia coli O45:K1 (strain S88 / ExPEC)</name>
    <dbReference type="NCBI Taxonomy" id="585035"/>
    <lineage>
        <taxon>Bacteria</taxon>
        <taxon>Pseudomonadati</taxon>
        <taxon>Pseudomonadota</taxon>
        <taxon>Gammaproteobacteria</taxon>
        <taxon>Enterobacterales</taxon>
        <taxon>Enterobacteriaceae</taxon>
        <taxon>Escherichia</taxon>
    </lineage>
</organism>
<evidence type="ECO:0000255" key="1">
    <source>
        <dbReference type="HAMAP-Rule" id="MF_00110"/>
    </source>
</evidence>
<accession>B7MD00</accession>
<feature type="chain" id="PRO_1000117484" description="3-dehydroquinate synthase">
    <location>
        <begin position="1"/>
        <end position="362"/>
    </location>
</feature>
<feature type="binding site" evidence="1">
    <location>
        <begin position="71"/>
        <end position="76"/>
    </location>
    <ligand>
        <name>NAD(+)</name>
        <dbReference type="ChEBI" id="CHEBI:57540"/>
    </ligand>
</feature>
<feature type="binding site" evidence="1">
    <location>
        <begin position="105"/>
        <end position="109"/>
    </location>
    <ligand>
        <name>NAD(+)</name>
        <dbReference type="ChEBI" id="CHEBI:57540"/>
    </ligand>
</feature>
<feature type="binding site" evidence="1">
    <location>
        <begin position="129"/>
        <end position="130"/>
    </location>
    <ligand>
        <name>NAD(+)</name>
        <dbReference type="ChEBI" id="CHEBI:57540"/>
    </ligand>
</feature>
<feature type="binding site" evidence="1">
    <location>
        <position position="142"/>
    </location>
    <ligand>
        <name>NAD(+)</name>
        <dbReference type="ChEBI" id="CHEBI:57540"/>
    </ligand>
</feature>
<feature type="binding site" evidence="1">
    <location>
        <position position="151"/>
    </location>
    <ligand>
        <name>NAD(+)</name>
        <dbReference type="ChEBI" id="CHEBI:57540"/>
    </ligand>
</feature>
<feature type="binding site" evidence="1">
    <location>
        <begin position="169"/>
        <end position="172"/>
    </location>
    <ligand>
        <name>NAD(+)</name>
        <dbReference type="ChEBI" id="CHEBI:57540"/>
    </ligand>
</feature>
<feature type="binding site" evidence="1">
    <location>
        <position position="184"/>
    </location>
    <ligand>
        <name>Zn(2+)</name>
        <dbReference type="ChEBI" id="CHEBI:29105"/>
    </ligand>
</feature>
<feature type="binding site" evidence="1">
    <location>
        <position position="247"/>
    </location>
    <ligand>
        <name>Zn(2+)</name>
        <dbReference type="ChEBI" id="CHEBI:29105"/>
    </ligand>
</feature>
<feature type="binding site" evidence="1">
    <location>
        <position position="264"/>
    </location>
    <ligand>
        <name>Zn(2+)</name>
        <dbReference type="ChEBI" id="CHEBI:29105"/>
    </ligand>
</feature>
<reference key="1">
    <citation type="journal article" date="2009" name="PLoS Genet.">
        <title>Organised genome dynamics in the Escherichia coli species results in highly diverse adaptive paths.</title>
        <authorList>
            <person name="Touchon M."/>
            <person name="Hoede C."/>
            <person name="Tenaillon O."/>
            <person name="Barbe V."/>
            <person name="Baeriswyl S."/>
            <person name="Bidet P."/>
            <person name="Bingen E."/>
            <person name="Bonacorsi S."/>
            <person name="Bouchier C."/>
            <person name="Bouvet O."/>
            <person name="Calteau A."/>
            <person name="Chiapello H."/>
            <person name="Clermont O."/>
            <person name="Cruveiller S."/>
            <person name="Danchin A."/>
            <person name="Diard M."/>
            <person name="Dossat C."/>
            <person name="Karoui M.E."/>
            <person name="Frapy E."/>
            <person name="Garry L."/>
            <person name="Ghigo J.M."/>
            <person name="Gilles A.M."/>
            <person name="Johnson J."/>
            <person name="Le Bouguenec C."/>
            <person name="Lescat M."/>
            <person name="Mangenot S."/>
            <person name="Martinez-Jehanne V."/>
            <person name="Matic I."/>
            <person name="Nassif X."/>
            <person name="Oztas S."/>
            <person name="Petit M.A."/>
            <person name="Pichon C."/>
            <person name="Rouy Z."/>
            <person name="Ruf C.S."/>
            <person name="Schneider D."/>
            <person name="Tourret J."/>
            <person name="Vacherie B."/>
            <person name="Vallenet D."/>
            <person name="Medigue C."/>
            <person name="Rocha E.P.C."/>
            <person name="Denamur E."/>
        </authorList>
    </citation>
    <scope>NUCLEOTIDE SEQUENCE [LARGE SCALE GENOMIC DNA]</scope>
    <source>
        <strain>S88 / ExPEC</strain>
    </source>
</reference>